<keyword id="KW-0175">Coiled coil</keyword>
<keyword id="KW-0963">Cytoplasm</keyword>
<keyword id="KW-0597">Phosphoprotein</keyword>
<keyword id="KW-1185">Reference proteome</keyword>
<gene>
    <name type="primary">TDA11</name>
    <name type="ordered locus">YHR159W</name>
</gene>
<reference key="1">
    <citation type="journal article" date="1994" name="Science">
        <title>Complete nucleotide sequence of Saccharomyces cerevisiae chromosome VIII.</title>
        <authorList>
            <person name="Johnston M."/>
            <person name="Andrews S."/>
            <person name="Brinkman R."/>
            <person name="Cooper J."/>
            <person name="Ding H."/>
            <person name="Dover J."/>
            <person name="Du Z."/>
            <person name="Favello A."/>
            <person name="Fulton L."/>
            <person name="Gattung S."/>
            <person name="Geisel C."/>
            <person name="Kirsten J."/>
            <person name="Kucaba T."/>
            <person name="Hillier L.W."/>
            <person name="Jier M."/>
            <person name="Johnston L."/>
            <person name="Langston Y."/>
            <person name="Latreille P."/>
            <person name="Louis E.J."/>
            <person name="Macri C."/>
            <person name="Mardis E."/>
            <person name="Menezes S."/>
            <person name="Mouser L."/>
            <person name="Nhan M."/>
            <person name="Rifkin L."/>
            <person name="Riles L."/>
            <person name="St Peter H."/>
            <person name="Trevaskis E."/>
            <person name="Vaughan K."/>
            <person name="Vignati D."/>
            <person name="Wilcox L."/>
            <person name="Wohldman P."/>
            <person name="Waterston R."/>
            <person name="Wilson R."/>
            <person name="Vaudin M."/>
        </authorList>
    </citation>
    <scope>NUCLEOTIDE SEQUENCE [LARGE SCALE GENOMIC DNA]</scope>
    <source>
        <strain>ATCC 204508 / S288c</strain>
    </source>
</reference>
<reference key="2">
    <citation type="journal article" date="2014" name="G3 (Bethesda)">
        <title>The reference genome sequence of Saccharomyces cerevisiae: Then and now.</title>
        <authorList>
            <person name="Engel S.R."/>
            <person name="Dietrich F.S."/>
            <person name="Fisk D.G."/>
            <person name="Binkley G."/>
            <person name="Balakrishnan R."/>
            <person name="Costanzo M.C."/>
            <person name="Dwight S.S."/>
            <person name="Hitz B.C."/>
            <person name="Karra K."/>
            <person name="Nash R.S."/>
            <person name="Weng S."/>
            <person name="Wong E.D."/>
            <person name="Lloyd P."/>
            <person name="Skrzypek M.S."/>
            <person name="Miyasato S.R."/>
            <person name="Simison M."/>
            <person name="Cherry J.M."/>
        </authorList>
    </citation>
    <scope>GENOME REANNOTATION</scope>
    <source>
        <strain>ATCC 204508 / S288c</strain>
    </source>
</reference>
<reference key="3">
    <citation type="journal article" date="2003" name="Nature">
        <title>Global analysis of protein localization in budding yeast.</title>
        <authorList>
            <person name="Huh W.-K."/>
            <person name="Falvo J.V."/>
            <person name="Gerke L.C."/>
            <person name="Carroll A.S."/>
            <person name="Howson R.W."/>
            <person name="Weissman J.S."/>
            <person name="O'Shea E.K."/>
        </authorList>
    </citation>
    <scope>SUBCELLULAR LOCATION [LARGE SCALE ANALYSIS]</scope>
</reference>
<reference key="4">
    <citation type="journal article" date="2003" name="Nature">
        <title>Global analysis of protein expression in yeast.</title>
        <authorList>
            <person name="Ghaemmaghami S."/>
            <person name="Huh W.-K."/>
            <person name="Bower K."/>
            <person name="Howson R.W."/>
            <person name="Belle A."/>
            <person name="Dephoure N."/>
            <person name="O'Shea E.K."/>
            <person name="Weissman J.S."/>
        </authorList>
    </citation>
    <scope>LEVEL OF PROTEIN EXPRESSION [LARGE SCALE ANALYSIS]</scope>
</reference>
<reference key="5">
    <citation type="journal article" date="2008" name="Mol. Cell. Proteomics">
        <title>A multidimensional chromatography technology for in-depth phosphoproteome analysis.</title>
        <authorList>
            <person name="Albuquerque C.P."/>
            <person name="Smolka M.B."/>
            <person name="Payne S.H."/>
            <person name="Bafna V."/>
            <person name="Eng J."/>
            <person name="Zhou H."/>
        </authorList>
    </citation>
    <scope>PHOSPHORYLATION [LARGE SCALE ANALYSIS] AT THR-236; SER-244 AND SER-286</scope>
    <scope>IDENTIFICATION BY MASS SPECTROMETRY [LARGE SCALE ANALYSIS]</scope>
</reference>
<reference key="6">
    <citation type="journal article" date="2009" name="Science">
        <title>Global analysis of Cdk1 substrate phosphorylation sites provides insights into evolution.</title>
        <authorList>
            <person name="Holt L.J."/>
            <person name="Tuch B.B."/>
            <person name="Villen J."/>
            <person name="Johnson A.D."/>
            <person name="Gygi S.P."/>
            <person name="Morgan D.O."/>
        </authorList>
    </citation>
    <scope>PHOSPHORYLATION [LARGE SCALE ANALYSIS] AT THR-236 AND SER-244</scope>
    <scope>IDENTIFICATION BY MASS SPECTROMETRY [LARGE SCALE ANALYSIS]</scope>
</reference>
<reference key="7">
    <citation type="journal article" date="2011" name="Genome Res.">
        <title>Selective ploidy ablation, a high-throughput plasmid transfer protocol, identifies new genes affecting topoisomerase I-induced DNA damage.</title>
        <authorList>
            <person name="Reid R.J."/>
            <person name="Gonzalez-Barrera S."/>
            <person name="Sunjevaric I."/>
            <person name="Alvaro D."/>
            <person name="Ciccone S."/>
            <person name="Wagner M."/>
            <person name="Rothstein R."/>
        </authorList>
    </citation>
    <scope>DISRUPTION PHENOTYPE</scope>
</reference>
<reference key="8">
    <citation type="journal article" date="2012" name="Proc. Natl. Acad. Sci. U.S.A.">
        <title>N-terminal acetylome analyses and functional insights of the N-terminal acetyltransferase NatB.</title>
        <authorList>
            <person name="Van Damme P."/>
            <person name="Lasa M."/>
            <person name="Polevoda B."/>
            <person name="Gazquez C."/>
            <person name="Elosegui-Artola A."/>
            <person name="Kim D.S."/>
            <person name="De Juan-Pardo E."/>
            <person name="Demeyer K."/>
            <person name="Hole K."/>
            <person name="Larrea E."/>
            <person name="Timmerman E."/>
            <person name="Prieto J."/>
            <person name="Arnesen T."/>
            <person name="Sherman F."/>
            <person name="Gevaert K."/>
            <person name="Aldabe R."/>
        </authorList>
    </citation>
    <scope>IDENTIFICATION BY MASS SPECTROMETRY [LARGE SCALE ANALYSIS]</scope>
</reference>
<proteinExistence type="evidence at protein level"/>
<comment type="subcellular location">
    <subcellularLocation>
        <location evidence="3">Cytoplasm</location>
    </subcellularLocation>
</comment>
<comment type="disruption phenotype">
    <text evidence="5">Leads to cell death when overexpressing the camptothecin mimetic TOP1-T(722)A mutant.</text>
</comment>
<comment type="miscellaneous">
    <text evidence="4">Present with 504 molecules/cell in log phase SD medium.</text>
</comment>
<comment type="similarity">
    <text evidence="6">Belongs to the TDA11 family.</text>
</comment>
<sequence length="504" mass="56314">MNKFDEFIESNEKDLDVDTSTRNSIISMSPVRKTGRKIRSASSNGYRLEHHRTSSAGSMHSQRLMTPTRLNDQDHPLQAKPDARRVVTRHSSVSVPNAMSKRRSLIQPMVVPTTPESQNNLPSVSHSEGSYGIPLESTTVLSSEQAMASGLRRSRNGSSQSVNSMIATTIPTNGVDVSALLQSLATKELELLECKQKIEDLKKQTQHEEQNYTRRARELHELKEQVSKHLDPSLNTPVKNRAFSPVYQNIPLESRTENAGNSSLPSSVSKPKNMGHQSTNQSRSVSPQDIQERRQRDDSSDSSKQSLWSKPLALFNQFDKIIQHEIERTLNWDDSLSGTPEVQEGTPTSNSESSAQQYDNEAPGARQKSPSQGSVSRSLWSFVSDVKAGLLGIEEENDNDVITDNRCDPVYKSDRQHEQKKSTHKITNRGQAEDSGDDSSLNMRKFKTTTKFQKDNAGNNSLTDESGHRTREKKSKRSSNKLSFIGEPDNDNSSVKNSVEMTDF</sequence>
<protein>
    <recommendedName>
        <fullName>Topoisomerase I damage affected protein 11</fullName>
    </recommendedName>
</protein>
<organism>
    <name type="scientific">Saccharomyces cerevisiae (strain ATCC 204508 / S288c)</name>
    <name type="common">Baker's yeast</name>
    <dbReference type="NCBI Taxonomy" id="559292"/>
    <lineage>
        <taxon>Eukaryota</taxon>
        <taxon>Fungi</taxon>
        <taxon>Dikarya</taxon>
        <taxon>Ascomycota</taxon>
        <taxon>Saccharomycotina</taxon>
        <taxon>Saccharomycetes</taxon>
        <taxon>Saccharomycetales</taxon>
        <taxon>Saccharomycetaceae</taxon>
        <taxon>Saccharomyces</taxon>
    </lineage>
</organism>
<name>TDA11_YEAST</name>
<accession>P38854</accession>
<accession>D3DLA8</accession>
<evidence type="ECO:0000255" key="1"/>
<evidence type="ECO:0000256" key="2">
    <source>
        <dbReference type="SAM" id="MobiDB-lite"/>
    </source>
</evidence>
<evidence type="ECO:0000269" key="3">
    <source>
    </source>
</evidence>
<evidence type="ECO:0000269" key="4">
    <source>
    </source>
</evidence>
<evidence type="ECO:0000269" key="5">
    <source>
    </source>
</evidence>
<evidence type="ECO:0000305" key="6"/>
<evidence type="ECO:0007744" key="7">
    <source>
    </source>
</evidence>
<evidence type="ECO:0007744" key="8">
    <source>
    </source>
</evidence>
<dbReference type="EMBL" id="U10397">
    <property type="protein sequence ID" value="AAB68975.1"/>
    <property type="molecule type" value="Genomic_DNA"/>
</dbReference>
<dbReference type="EMBL" id="BK006934">
    <property type="protein sequence ID" value="DAA06852.1"/>
    <property type="molecule type" value="Genomic_DNA"/>
</dbReference>
<dbReference type="PIR" id="S46752">
    <property type="entry name" value="S46752"/>
</dbReference>
<dbReference type="RefSeq" id="NP_012029.1">
    <property type="nucleotide sequence ID" value="NM_001179290.1"/>
</dbReference>
<dbReference type="SMR" id="P38854"/>
<dbReference type="BioGRID" id="36593">
    <property type="interactions" value="83"/>
</dbReference>
<dbReference type="DIP" id="DIP-4846N"/>
<dbReference type="FunCoup" id="P38854">
    <property type="interactions" value="28"/>
</dbReference>
<dbReference type="IntAct" id="P38854">
    <property type="interactions" value="1"/>
</dbReference>
<dbReference type="STRING" id="4932.YHR159W"/>
<dbReference type="iPTMnet" id="P38854"/>
<dbReference type="PaxDb" id="4932-YHR159W"/>
<dbReference type="PeptideAtlas" id="P38854"/>
<dbReference type="EnsemblFungi" id="YHR159W_mRNA">
    <property type="protein sequence ID" value="YHR159W"/>
    <property type="gene ID" value="YHR159W"/>
</dbReference>
<dbReference type="GeneID" id="856564"/>
<dbReference type="KEGG" id="sce:YHR159W"/>
<dbReference type="AGR" id="SGD:S000001202"/>
<dbReference type="SGD" id="S000001202">
    <property type="gene designation" value="TDA11"/>
</dbReference>
<dbReference type="VEuPathDB" id="FungiDB:YHR159W"/>
<dbReference type="eggNOG" id="ENOG502S2SD">
    <property type="taxonomic scope" value="Eukaryota"/>
</dbReference>
<dbReference type="HOGENOM" id="CLU_046807_0_0_1"/>
<dbReference type="InParanoid" id="P38854"/>
<dbReference type="OMA" id="ERTLNWD"/>
<dbReference type="OrthoDB" id="4036304at2759"/>
<dbReference type="BioCyc" id="YEAST:G3O-31194-MONOMER"/>
<dbReference type="BioGRID-ORCS" id="856564">
    <property type="hits" value="0 hits in 10 CRISPR screens"/>
</dbReference>
<dbReference type="PRO" id="PR:P38854"/>
<dbReference type="Proteomes" id="UP000002311">
    <property type="component" value="Chromosome VIII"/>
</dbReference>
<dbReference type="RNAct" id="P38854">
    <property type="molecule type" value="protein"/>
</dbReference>
<dbReference type="GO" id="GO:0005737">
    <property type="term" value="C:cytoplasm"/>
    <property type="evidence" value="ECO:0007005"/>
    <property type="project" value="SGD"/>
</dbReference>
<dbReference type="InterPro" id="IPR031388">
    <property type="entry name" value="Tda11"/>
</dbReference>
<dbReference type="Pfam" id="PF17084">
    <property type="entry name" value="TDA11"/>
    <property type="match status" value="1"/>
</dbReference>
<feature type="chain" id="PRO_0000202928" description="Topoisomerase I damage affected protein 11">
    <location>
        <begin position="1"/>
        <end position="504"/>
    </location>
</feature>
<feature type="region of interest" description="Disordered" evidence="2">
    <location>
        <begin position="32"/>
        <end position="62"/>
    </location>
</feature>
<feature type="region of interest" description="Disordered" evidence="2">
    <location>
        <begin position="252"/>
        <end position="306"/>
    </location>
</feature>
<feature type="region of interest" description="Disordered" evidence="2">
    <location>
        <begin position="332"/>
        <end position="377"/>
    </location>
</feature>
<feature type="region of interest" description="Disordered" evidence="2">
    <location>
        <begin position="400"/>
        <end position="504"/>
    </location>
</feature>
<feature type="coiled-coil region" evidence="1">
    <location>
        <begin position="179"/>
        <end position="231"/>
    </location>
</feature>
<feature type="compositionally biased region" description="Polar residues" evidence="2">
    <location>
        <begin position="257"/>
        <end position="287"/>
    </location>
</feature>
<feature type="compositionally biased region" description="Basic and acidic residues" evidence="2">
    <location>
        <begin position="290"/>
        <end position="301"/>
    </location>
</feature>
<feature type="compositionally biased region" description="Polar residues" evidence="2">
    <location>
        <begin position="332"/>
        <end position="359"/>
    </location>
</feature>
<feature type="compositionally biased region" description="Polar residues" evidence="2">
    <location>
        <begin position="368"/>
        <end position="377"/>
    </location>
</feature>
<feature type="compositionally biased region" description="Basic and acidic residues" evidence="2">
    <location>
        <begin position="403"/>
        <end position="421"/>
    </location>
</feature>
<feature type="compositionally biased region" description="Basic residues" evidence="2">
    <location>
        <begin position="470"/>
        <end position="479"/>
    </location>
</feature>
<feature type="compositionally biased region" description="Polar residues" evidence="2">
    <location>
        <begin position="491"/>
        <end position="504"/>
    </location>
</feature>
<feature type="modified residue" description="Phosphothreonine" evidence="7 8">
    <location>
        <position position="236"/>
    </location>
</feature>
<feature type="modified residue" description="Phosphoserine" evidence="7 8">
    <location>
        <position position="244"/>
    </location>
</feature>
<feature type="modified residue" description="Phosphoserine" evidence="7">
    <location>
        <position position="286"/>
    </location>
</feature>